<evidence type="ECO:0000255" key="1">
    <source>
        <dbReference type="HAMAP-Rule" id="MF_00148"/>
    </source>
</evidence>
<proteinExistence type="inferred from homology"/>
<protein>
    <recommendedName>
        <fullName evidence="1">Uracil-DNA glycosylase 1</fullName>
        <shortName evidence="1">UDG 1</shortName>
        <ecNumber evidence="1">3.2.2.27</ecNumber>
    </recommendedName>
</protein>
<gene>
    <name evidence="1" type="primary">ung1</name>
    <name type="ordered locus">BF3503</name>
</gene>
<dbReference type="EC" id="3.2.2.27" evidence="1"/>
<dbReference type="EMBL" id="AP006841">
    <property type="protein sequence ID" value="BAD50246.1"/>
    <property type="molecule type" value="Genomic_DNA"/>
</dbReference>
<dbReference type="RefSeq" id="YP_100780.1">
    <property type="nucleotide sequence ID" value="NC_006347.1"/>
</dbReference>
<dbReference type="SMR" id="Q64QI5"/>
<dbReference type="STRING" id="295405.BF3503"/>
<dbReference type="KEGG" id="bfr:BF3503"/>
<dbReference type="PATRIC" id="fig|295405.11.peg.3366"/>
<dbReference type="HOGENOM" id="CLU_032162_3_0_10"/>
<dbReference type="OrthoDB" id="9804372at2"/>
<dbReference type="Proteomes" id="UP000002197">
    <property type="component" value="Chromosome"/>
</dbReference>
<dbReference type="GO" id="GO:0005737">
    <property type="term" value="C:cytoplasm"/>
    <property type="evidence" value="ECO:0007669"/>
    <property type="project" value="UniProtKB-SubCell"/>
</dbReference>
<dbReference type="GO" id="GO:0004844">
    <property type="term" value="F:uracil DNA N-glycosylase activity"/>
    <property type="evidence" value="ECO:0007669"/>
    <property type="project" value="UniProtKB-UniRule"/>
</dbReference>
<dbReference type="GO" id="GO:0097510">
    <property type="term" value="P:base-excision repair, AP site formation via deaminated base removal"/>
    <property type="evidence" value="ECO:0007669"/>
    <property type="project" value="TreeGrafter"/>
</dbReference>
<dbReference type="CDD" id="cd10027">
    <property type="entry name" value="UDG-F1-like"/>
    <property type="match status" value="1"/>
</dbReference>
<dbReference type="FunFam" id="3.40.470.10:FF:000001">
    <property type="entry name" value="Uracil-DNA glycosylase"/>
    <property type="match status" value="1"/>
</dbReference>
<dbReference type="Gene3D" id="3.40.470.10">
    <property type="entry name" value="Uracil-DNA glycosylase-like domain"/>
    <property type="match status" value="1"/>
</dbReference>
<dbReference type="HAMAP" id="MF_00148">
    <property type="entry name" value="UDG"/>
    <property type="match status" value="1"/>
</dbReference>
<dbReference type="InterPro" id="IPR002043">
    <property type="entry name" value="UDG_fam1"/>
</dbReference>
<dbReference type="InterPro" id="IPR018085">
    <property type="entry name" value="Ura-DNA_Glyclase_AS"/>
</dbReference>
<dbReference type="InterPro" id="IPR005122">
    <property type="entry name" value="Uracil-DNA_glycosylase-like"/>
</dbReference>
<dbReference type="InterPro" id="IPR036895">
    <property type="entry name" value="Uracil-DNA_glycosylase-like_sf"/>
</dbReference>
<dbReference type="NCBIfam" id="NF003588">
    <property type="entry name" value="PRK05254.1-1"/>
    <property type="match status" value="1"/>
</dbReference>
<dbReference type="NCBIfam" id="NF003589">
    <property type="entry name" value="PRK05254.1-2"/>
    <property type="match status" value="1"/>
</dbReference>
<dbReference type="NCBIfam" id="NF003591">
    <property type="entry name" value="PRK05254.1-4"/>
    <property type="match status" value="1"/>
</dbReference>
<dbReference type="NCBIfam" id="NF003592">
    <property type="entry name" value="PRK05254.1-5"/>
    <property type="match status" value="1"/>
</dbReference>
<dbReference type="NCBIfam" id="TIGR00628">
    <property type="entry name" value="ung"/>
    <property type="match status" value="1"/>
</dbReference>
<dbReference type="PANTHER" id="PTHR11264">
    <property type="entry name" value="URACIL-DNA GLYCOSYLASE"/>
    <property type="match status" value="1"/>
</dbReference>
<dbReference type="PANTHER" id="PTHR11264:SF0">
    <property type="entry name" value="URACIL-DNA GLYCOSYLASE"/>
    <property type="match status" value="1"/>
</dbReference>
<dbReference type="Pfam" id="PF03167">
    <property type="entry name" value="UDG"/>
    <property type="match status" value="1"/>
</dbReference>
<dbReference type="SMART" id="SM00986">
    <property type="entry name" value="UDG"/>
    <property type="match status" value="1"/>
</dbReference>
<dbReference type="SMART" id="SM00987">
    <property type="entry name" value="UreE_C"/>
    <property type="match status" value="1"/>
</dbReference>
<dbReference type="SUPFAM" id="SSF52141">
    <property type="entry name" value="Uracil-DNA glycosylase-like"/>
    <property type="match status" value="1"/>
</dbReference>
<dbReference type="PROSITE" id="PS00130">
    <property type="entry name" value="U_DNA_GLYCOSYLASE"/>
    <property type="match status" value="1"/>
</dbReference>
<feature type="chain" id="PRO_0000176061" description="Uracil-DNA glycosylase 1">
    <location>
        <begin position="1"/>
        <end position="220"/>
    </location>
</feature>
<feature type="active site" description="Proton acceptor" evidence="1">
    <location>
        <position position="65"/>
    </location>
</feature>
<comment type="function">
    <text evidence="1">Excises uracil residues from the DNA which can arise as a result of misincorporation of dUMP residues by DNA polymerase or due to deamination of cytosine.</text>
</comment>
<comment type="catalytic activity">
    <reaction evidence="1">
        <text>Hydrolyzes single-stranded DNA or mismatched double-stranded DNA and polynucleotides, releasing free uracil.</text>
        <dbReference type="EC" id="3.2.2.27"/>
    </reaction>
</comment>
<comment type="subcellular location">
    <subcellularLocation>
        <location evidence="1">Cytoplasm</location>
    </subcellularLocation>
</comment>
<comment type="similarity">
    <text evidence="1">Belongs to the uracil-DNA glycosylase (UDG) superfamily. UNG family.</text>
</comment>
<reference key="1">
    <citation type="journal article" date="2004" name="Proc. Natl. Acad. Sci. U.S.A.">
        <title>Genomic analysis of Bacteroides fragilis reveals extensive DNA inversions regulating cell surface adaptation.</title>
        <authorList>
            <person name="Kuwahara T."/>
            <person name="Yamashita A."/>
            <person name="Hirakawa H."/>
            <person name="Nakayama H."/>
            <person name="Toh H."/>
            <person name="Okada N."/>
            <person name="Kuhara S."/>
            <person name="Hattori M."/>
            <person name="Hayashi T."/>
            <person name="Ohnishi Y."/>
        </authorList>
    </citation>
    <scope>NUCLEOTIDE SEQUENCE [LARGE SCALE GENOMIC DNA]</scope>
    <source>
        <strain>YCH46</strain>
    </source>
</reference>
<name>UNG1_BACFR</name>
<keyword id="KW-0963">Cytoplasm</keyword>
<keyword id="KW-0227">DNA damage</keyword>
<keyword id="KW-0234">DNA repair</keyword>
<keyword id="KW-0378">Hydrolase</keyword>
<organism>
    <name type="scientific">Bacteroides fragilis (strain YCH46)</name>
    <dbReference type="NCBI Taxonomy" id="295405"/>
    <lineage>
        <taxon>Bacteria</taxon>
        <taxon>Pseudomonadati</taxon>
        <taxon>Bacteroidota</taxon>
        <taxon>Bacteroidia</taxon>
        <taxon>Bacteroidales</taxon>
        <taxon>Bacteroidaceae</taxon>
        <taxon>Bacteroides</taxon>
    </lineage>
</organism>
<accession>Q64QI5</accession>
<sequence length="220" mass="25126">MNVKIESSWQQRLQEEFDKPYFEKLVNFVKNEYGKAHILPPGHQIFHVFNSCPFQNVKVVILGQDPYPNPGQYYGICFSVPDGVAIPGSLSNIFKEIHQDLGKPIPNSGNLDRWVKQGVFPMNSVLTVRAHETGSHRNIGWETFTDAVIKKLSEERENLVFMLWGSYAKEKASLIDTDKHLILTAVHPSPRSADYGFFGCKHFSKANTFLRSRGIEEIDW</sequence>